<feature type="chain" id="PRO_0000389912" description="NADH-quinone oxidoreductase subunit K">
    <location>
        <begin position="1"/>
        <end position="102"/>
    </location>
</feature>
<feature type="transmembrane region" description="Helical" evidence="1">
    <location>
        <begin position="5"/>
        <end position="25"/>
    </location>
</feature>
<feature type="transmembrane region" description="Helical" evidence="1">
    <location>
        <begin position="31"/>
        <end position="51"/>
    </location>
</feature>
<feature type="transmembrane region" description="Helical" evidence="1">
    <location>
        <begin position="62"/>
        <end position="82"/>
    </location>
</feature>
<accession>A1TLM6</accession>
<sequence>MTLTLGHFLSLGAMLFALSVIGIFLNRKNLIVLLMAIELMLLAVNMNFVAFSHYLGDMHGQVFVFFILTVAAAESAIGLAILVLLFRNKSSIDAEDLNTLKG</sequence>
<reference key="1">
    <citation type="submission" date="2006-12" db="EMBL/GenBank/DDBJ databases">
        <title>Complete sequence of Acidovorax avenae subsp. citrulli AAC00-1.</title>
        <authorList>
            <person name="Copeland A."/>
            <person name="Lucas S."/>
            <person name="Lapidus A."/>
            <person name="Barry K."/>
            <person name="Detter J.C."/>
            <person name="Glavina del Rio T."/>
            <person name="Dalin E."/>
            <person name="Tice H."/>
            <person name="Pitluck S."/>
            <person name="Kiss H."/>
            <person name="Brettin T."/>
            <person name="Bruce D."/>
            <person name="Han C."/>
            <person name="Tapia R."/>
            <person name="Gilna P."/>
            <person name="Schmutz J."/>
            <person name="Larimer F."/>
            <person name="Land M."/>
            <person name="Hauser L."/>
            <person name="Kyrpides N."/>
            <person name="Kim E."/>
            <person name="Stahl D."/>
            <person name="Richardson P."/>
        </authorList>
    </citation>
    <scope>NUCLEOTIDE SEQUENCE [LARGE SCALE GENOMIC DNA]</scope>
    <source>
        <strain>AAC00-1</strain>
    </source>
</reference>
<name>NUOK_PARC0</name>
<keyword id="KW-0997">Cell inner membrane</keyword>
<keyword id="KW-1003">Cell membrane</keyword>
<keyword id="KW-0472">Membrane</keyword>
<keyword id="KW-0520">NAD</keyword>
<keyword id="KW-0874">Quinone</keyword>
<keyword id="KW-1278">Translocase</keyword>
<keyword id="KW-0812">Transmembrane</keyword>
<keyword id="KW-1133">Transmembrane helix</keyword>
<keyword id="KW-0813">Transport</keyword>
<keyword id="KW-0830">Ubiquinone</keyword>
<comment type="function">
    <text evidence="1">NDH-1 shuttles electrons from NADH, via FMN and iron-sulfur (Fe-S) centers, to quinones in the respiratory chain. The immediate electron acceptor for the enzyme in this species is believed to be ubiquinone. Couples the redox reaction to proton translocation (for every two electrons transferred, four hydrogen ions are translocated across the cytoplasmic membrane), and thus conserves the redox energy in a proton gradient.</text>
</comment>
<comment type="catalytic activity">
    <reaction evidence="1">
        <text>a quinone + NADH + 5 H(+)(in) = a quinol + NAD(+) + 4 H(+)(out)</text>
        <dbReference type="Rhea" id="RHEA:57888"/>
        <dbReference type="ChEBI" id="CHEBI:15378"/>
        <dbReference type="ChEBI" id="CHEBI:24646"/>
        <dbReference type="ChEBI" id="CHEBI:57540"/>
        <dbReference type="ChEBI" id="CHEBI:57945"/>
        <dbReference type="ChEBI" id="CHEBI:132124"/>
    </reaction>
</comment>
<comment type="subunit">
    <text evidence="1">NDH-1 is composed of 14 different subunits. Subunits NuoA, H, J, K, L, M, N constitute the membrane sector of the complex.</text>
</comment>
<comment type="subcellular location">
    <subcellularLocation>
        <location evidence="1">Cell inner membrane</location>
        <topology evidence="1">Multi-pass membrane protein</topology>
    </subcellularLocation>
</comment>
<comment type="similarity">
    <text evidence="1">Belongs to the complex I subunit 4L family.</text>
</comment>
<evidence type="ECO:0000255" key="1">
    <source>
        <dbReference type="HAMAP-Rule" id="MF_01456"/>
    </source>
</evidence>
<proteinExistence type="inferred from homology"/>
<gene>
    <name evidence="1" type="primary">nuoK</name>
    <name type="ordered locus">Aave_1273</name>
</gene>
<dbReference type="EC" id="7.1.1.-" evidence="1"/>
<dbReference type="EMBL" id="CP000512">
    <property type="protein sequence ID" value="ABM31864.1"/>
    <property type="molecule type" value="Genomic_DNA"/>
</dbReference>
<dbReference type="RefSeq" id="WP_011794416.1">
    <property type="nucleotide sequence ID" value="NC_008752.1"/>
</dbReference>
<dbReference type="SMR" id="A1TLM6"/>
<dbReference type="STRING" id="397945.Aave_1273"/>
<dbReference type="GeneID" id="79790936"/>
<dbReference type="KEGG" id="aav:Aave_1273"/>
<dbReference type="eggNOG" id="COG0713">
    <property type="taxonomic scope" value="Bacteria"/>
</dbReference>
<dbReference type="HOGENOM" id="CLU_144724_2_0_4"/>
<dbReference type="OrthoDB" id="9801357at2"/>
<dbReference type="Proteomes" id="UP000002596">
    <property type="component" value="Chromosome"/>
</dbReference>
<dbReference type="GO" id="GO:0030964">
    <property type="term" value="C:NADH dehydrogenase complex"/>
    <property type="evidence" value="ECO:0007669"/>
    <property type="project" value="TreeGrafter"/>
</dbReference>
<dbReference type="GO" id="GO:0005886">
    <property type="term" value="C:plasma membrane"/>
    <property type="evidence" value="ECO:0007669"/>
    <property type="project" value="UniProtKB-SubCell"/>
</dbReference>
<dbReference type="GO" id="GO:0050136">
    <property type="term" value="F:NADH:ubiquinone reductase (non-electrogenic) activity"/>
    <property type="evidence" value="ECO:0007669"/>
    <property type="project" value="UniProtKB-UniRule"/>
</dbReference>
<dbReference type="GO" id="GO:0048038">
    <property type="term" value="F:quinone binding"/>
    <property type="evidence" value="ECO:0007669"/>
    <property type="project" value="UniProtKB-KW"/>
</dbReference>
<dbReference type="GO" id="GO:0042773">
    <property type="term" value="P:ATP synthesis coupled electron transport"/>
    <property type="evidence" value="ECO:0007669"/>
    <property type="project" value="InterPro"/>
</dbReference>
<dbReference type="FunFam" id="1.10.287.3510:FF:000001">
    <property type="entry name" value="NADH-quinone oxidoreductase subunit K"/>
    <property type="match status" value="1"/>
</dbReference>
<dbReference type="Gene3D" id="1.10.287.3510">
    <property type="match status" value="1"/>
</dbReference>
<dbReference type="HAMAP" id="MF_01456">
    <property type="entry name" value="NDH1_NuoK"/>
    <property type="match status" value="1"/>
</dbReference>
<dbReference type="InterPro" id="IPR001133">
    <property type="entry name" value="NADH_UbQ_OxRdtase_chain4L/K"/>
</dbReference>
<dbReference type="InterPro" id="IPR039428">
    <property type="entry name" value="NUOK/Mnh_C1-like"/>
</dbReference>
<dbReference type="NCBIfam" id="NF004320">
    <property type="entry name" value="PRK05715.1-2"/>
    <property type="match status" value="1"/>
</dbReference>
<dbReference type="NCBIfam" id="NF004321">
    <property type="entry name" value="PRK05715.1-3"/>
    <property type="match status" value="1"/>
</dbReference>
<dbReference type="NCBIfam" id="NF004323">
    <property type="entry name" value="PRK05715.1-5"/>
    <property type="match status" value="1"/>
</dbReference>
<dbReference type="PANTHER" id="PTHR11434:SF21">
    <property type="entry name" value="NADH DEHYDROGENASE SUBUNIT 4L-RELATED"/>
    <property type="match status" value="1"/>
</dbReference>
<dbReference type="PANTHER" id="PTHR11434">
    <property type="entry name" value="NADH-UBIQUINONE OXIDOREDUCTASE SUBUNIT ND4L"/>
    <property type="match status" value="1"/>
</dbReference>
<dbReference type="Pfam" id="PF00420">
    <property type="entry name" value="Oxidored_q2"/>
    <property type="match status" value="1"/>
</dbReference>
<organism>
    <name type="scientific">Paracidovorax citrulli (strain AAC00-1)</name>
    <name type="common">Acidovorax citrulli</name>
    <dbReference type="NCBI Taxonomy" id="397945"/>
    <lineage>
        <taxon>Bacteria</taxon>
        <taxon>Pseudomonadati</taxon>
        <taxon>Pseudomonadota</taxon>
        <taxon>Betaproteobacteria</taxon>
        <taxon>Burkholderiales</taxon>
        <taxon>Comamonadaceae</taxon>
        <taxon>Paracidovorax</taxon>
    </lineage>
</organism>
<protein>
    <recommendedName>
        <fullName evidence="1">NADH-quinone oxidoreductase subunit K</fullName>
        <ecNumber evidence="1">7.1.1.-</ecNumber>
    </recommendedName>
    <alternativeName>
        <fullName evidence="1">NADH dehydrogenase I subunit K</fullName>
    </alternativeName>
    <alternativeName>
        <fullName evidence="1">NDH-1 subunit K</fullName>
    </alternativeName>
</protein>